<comment type="function">
    <text>The enzyme cleaves Lys-Arg and Arg-Ser bonds. It activates, in a reciprocal reaction, factor XII after its binding to a negatively charged surface. It also releases bradykinin from HMW kininogen and may also play a role in the renin-angiotensin system by converting prorenin into renin.</text>
</comment>
<comment type="catalytic activity">
    <reaction>
        <text>Cleaves selectively Arg-|-Xaa and Lys-|-Xaa bonds, including Lys-|-Arg and Arg-|-Ser bonds in (human) kininogen to release bradykinin.</text>
        <dbReference type="EC" id="3.4.21.34"/>
    </reaction>
</comment>
<comment type="activity regulation">
    <text evidence="1">Inhibited by SERPINA5.</text>
</comment>
<comment type="subunit">
    <text evidence="1">Forms a heterodimer with SERPINA5. The zymogen is activated by factor XIIa, which cleaves the molecule into a light chain, which contains the active site, and a heavy chain, which associates with HMW kininogen. These chains are linked by one or more disulfide bonds (By similarity).</text>
</comment>
<comment type="subcellular location">
    <subcellularLocation>
        <location>Secreted</location>
    </subcellularLocation>
</comment>
<comment type="similarity">
    <text evidence="3">Belongs to the peptidase S1 family. Plasma kallikrein subfamily.</text>
</comment>
<reference key="1">
    <citation type="journal article" date="1990" name="DNA Cell Biol.">
        <title>Mouse plasma kallikrein: cDNA structure, enzyme characterization, and comparison of protein and mRNA levels among species.</title>
        <authorList>
            <person name="Seidah N.G."/>
            <person name="Sawyer N."/>
            <person name="Hamelin J."/>
            <person name="Mion P."/>
            <person name="Beaubien G."/>
            <person name="Brachpapa L."/>
            <person name="Rochemont J."/>
            <person name="Mbikay M."/>
            <person name="Chretien M."/>
        </authorList>
    </citation>
    <scope>NUCLEOTIDE SEQUENCE [MRNA]</scope>
    <scope>PARTIAL PROTEIN SEQUENCE</scope>
    <source>
        <strain>BALB/cJ</strain>
        <tissue>Liver</tissue>
    </source>
</reference>
<reference key="2">
    <citation type="journal article" date="2004" name="Genome Res.">
        <title>The status, quality, and expansion of the NIH full-length cDNA project: the Mammalian Gene Collection (MGC).</title>
        <authorList>
            <consortium name="The MGC Project Team"/>
        </authorList>
    </citation>
    <scope>NUCLEOTIDE SEQUENCE [LARGE SCALE MRNA]</scope>
    <source>
        <strain>FVB/N</strain>
        <tissue>Kidney</tissue>
    </source>
</reference>
<reference key="3">
    <citation type="journal article" date="2006" name="J. Proteome Res.">
        <title>Proteome-wide characterization of N-glycosylation events by diagonal chromatography.</title>
        <authorList>
            <person name="Ghesquiere B."/>
            <person name="Van Damme J."/>
            <person name="Martens L."/>
            <person name="Vandekerckhove J."/>
            <person name="Gevaert K."/>
        </authorList>
    </citation>
    <scope>GLYCOSYLATION [LARGE SCALE ANALYSIS] AT ASN-127</scope>
    <source>
        <strain>C57BL/6J</strain>
        <tissue>Plasma</tissue>
    </source>
</reference>
<reference key="4">
    <citation type="journal article" date="2007" name="J. Proteome Res.">
        <title>Enhanced analysis of the mouse plasma proteome using cysteine-containing tryptic glycopeptides.</title>
        <authorList>
            <person name="Bernhard O.K."/>
            <person name="Kapp E.A."/>
            <person name="Simpson R.J."/>
        </authorList>
    </citation>
    <scope>GLYCOSYLATION [LARGE SCALE ANALYSIS] AT ASN-127; ASN-396 AND ASN-494</scope>
    <source>
        <strain>C57BL/6J</strain>
        <tissue>Plasma</tissue>
    </source>
</reference>
<reference key="5">
    <citation type="journal article" date="2010" name="Cell">
        <title>A tissue-specific atlas of mouse protein phosphorylation and expression.</title>
        <authorList>
            <person name="Huttlin E.L."/>
            <person name="Jedrychowski M.P."/>
            <person name="Elias J.E."/>
            <person name="Goswami T."/>
            <person name="Rad R."/>
            <person name="Beausoleil S.A."/>
            <person name="Villen J."/>
            <person name="Haas W."/>
            <person name="Sowa M.E."/>
            <person name="Gygi S.P."/>
        </authorList>
    </citation>
    <scope>IDENTIFICATION BY MASS SPECTROMETRY [LARGE SCALE ANALYSIS]</scope>
    <source>
        <tissue>Brown adipose tissue</tissue>
        <tissue>Heart</tissue>
        <tissue>Liver</tissue>
        <tissue>Lung</tissue>
    </source>
</reference>
<keyword id="KW-0002">3D-structure</keyword>
<keyword id="KW-0094">Blood coagulation</keyword>
<keyword id="KW-0903">Direct protein sequencing</keyword>
<keyword id="KW-1015">Disulfide bond</keyword>
<keyword id="KW-0280">Fibrinolysis</keyword>
<keyword id="KW-0325">Glycoprotein</keyword>
<keyword id="KW-0356">Hemostasis</keyword>
<keyword id="KW-0378">Hydrolase</keyword>
<keyword id="KW-0395">Inflammatory response</keyword>
<keyword id="KW-0645">Protease</keyword>
<keyword id="KW-1185">Reference proteome</keyword>
<keyword id="KW-0677">Repeat</keyword>
<keyword id="KW-0964">Secreted</keyword>
<keyword id="KW-0720">Serine protease</keyword>
<keyword id="KW-0732">Signal</keyword>
<keyword id="KW-0865">Zymogen</keyword>
<feature type="signal peptide">
    <location>
        <begin position="1"/>
        <end position="19"/>
    </location>
</feature>
<feature type="chain" id="PRO_0000028023" description="Plasma kallikrein heavy chain">
    <location>
        <begin position="20"/>
        <end position="390"/>
    </location>
</feature>
<feature type="chain" id="PRO_0000028024" description="Plasma kallikrein light chain">
    <location>
        <begin position="391"/>
        <end position="638"/>
    </location>
</feature>
<feature type="domain" description="Apple 1" evidence="4">
    <location>
        <begin position="21"/>
        <end position="104"/>
    </location>
</feature>
<feature type="domain" description="Apple 2" evidence="4">
    <location>
        <begin position="111"/>
        <end position="194"/>
    </location>
</feature>
<feature type="domain" description="Apple 3" evidence="4">
    <location>
        <begin position="201"/>
        <end position="284"/>
    </location>
</feature>
<feature type="domain" description="Apple 4" evidence="4">
    <location>
        <begin position="292"/>
        <end position="375"/>
    </location>
</feature>
<feature type="domain" description="Peptidase S1" evidence="3">
    <location>
        <begin position="391"/>
        <end position="626"/>
    </location>
</feature>
<feature type="active site" description="Charge relay system">
    <location>
        <position position="434"/>
    </location>
</feature>
<feature type="active site" description="Charge relay system">
    <location>
        <position position="483"/>
    </location>
</feature>
<feature type="active site" description="Charge relay system">
    <location>
        <position position="578"/>
    </location>
</feature>
<feature type="glycosylation site" description="N-linked (GlcNAc...) asparagine" evidence="5 6">
    <location>
        <position position="127"/>
    </location>
</feature>
<feature type="glycosylation site" description="N-linked (GlcNAc...) asparagine" evidence="2">
    <location>
        <position position="215"/>
    </location>
</feature>
<feature type="glycosylation site" description="N-linked (GlcNAc...) asparagine" evidence="2">
    <location>
        <position position="308"/>
    </location>
</feature>
<feature type="glycosylation site" description="N-linked (GlcNAc...) asparagine" evidence="6">
    <location>
        <position position="396"/>
    </location>
</feature>
<feature type="glycosylation site" description="N-linked (GlcNAc...) asparagine" evidence="6">
    <location>
        <position position="494"/>
    </location>
</feature>
<feature type="disulfide bond" evidence="1">
    <location>
        <begin position="21"/>
        <end position="104"/>
    </location>
</feature>
<feature type="disulfide bond" evidence="1">
    <location>
        <begin position="47"/>
        <end position="77"/>
    </location>
</feature>
<feature type="disulfide bond" evidence="1">
    <location>
        <begin position="51"/>
        <end position="57"/>
    </location>
</feature>
<feature type="disulfide bond" evidence="1">
    <location>
        <begin position="111"/>
        <end position="194"/>
    </location>
</feature>
<feature type="disulfide bond" evidence="1">
    <location>
        <begin position="137"/>
        <end position="166"/>
    </location>
</feature>
<feature type="disulfide bond" evidence="1">
    <location>
        <begin position="141"/>
        <end position="147"/>
    </location>
</feature>
<feature type="disulfide bond" evidence="1">
    <location>
        <begin position="201"/>
        <end position="284"/>
    </location>
</feature>
<feature type="disulfide bond" evidence="1">
    <location>
        <begin position="227"/>
        <end position="256"/>
    </location>
</feature>
<feature type="disulfide bond" evidence="1">
    <location>
        <begin position="231"/>
        <end position="237"/>
    </location>
</feature>
<feature type="disulfide bond" evidence="1">
    <location>
        <begin position="292"/>
        <end position="375"/>
    </location>
</feature>
<feature type="disulfide bond" evidence="1">
    <location>
        <begin position="318"/>
        <end position="347"/>
    </location>
</feature>
<feature type="disulfide bond" evidence="1">
    <location>
        <begin position="322"/>
        <end position="328"/>
    </location>
</feature>
<feature type="disulfide bond" evidence="1">
    <location>
        <begin position="340"/>
        <end position="345"/>
    </location>
</feature>
<feature type="disulfide bond" evidence="1">
    <location>
        <begin position="383"/>
        <end position="503"/>
    </location>
</feature>
<feature type="disulfide bond" evidence="1">
    <location>
        <begin position="419"/>
        <end position="435"/>
    </location>
</feature>
<feature type="disulfide bond" evidence="1">
    <location>
        <begin position="517"/>
        <end position="584"/>
    </location>
</feature>
<feature type="disulfide bond" evidence="1">
    <location>
        <begin position="548"/>
        <end position="563"/>
    </location>
</feature>
<feature type="disulfide bond" evidence="1">
    <location>
        <begin position="574"/>
        <end position="602"/>
    </location>
</feature>
<feature type="sequence conflict" description="In Ref. 1; AAA63393." evidence="7" ref="1">
    <original>A</original>
    <variation>G</variation>
    <location>
        <position position="603"/>
    </location>
</feature>
<feature type="strand" evidence="8">
    <location>
        <begin position="405"/>
        <end position="423"/>
    </location>
</feature>
<feature type="strand" evidence="8">
    <location>
        <begin position="425"/>
        <end position="431"/>
    </location>
</feature>
<feature type="helix" evidence="8">
    <location>
        <begin position="433"/>
        <end position="436"/>
    </location>
</feature>
<feature type="helix" evidence="8">
    <location>
        <begin position="442"/>
        <end position="444"/>
    </location>
</feature>
<feature type="strand" evidence="8">
    <location>
        <begin position="445"/>
        <end position="448"/>
    </location>
</feature>
<feature type="helix" evidence="8">
    <location>
        <begin position="454"/>
        <end position="456"/>
    </location>
</feature>
<feature type="strand" evidence="8">
    <location>
        <begin position="466"/>
        <end position="471"/>
    </location>
</feature>
<feature type="strand" evidence="8">
    <location>
        <begin position="477"/>
        <end position="479"/>
    </location>
</feature>
<feature type="strand" evidence="8">
    <location>
        <begin position="485"/>
        <end position="491"/>
    </location>
</feature>
<feature type="helix" evidence="8">
    <location>
        <begin position="507"/>
        <end position="509"/>
    </location>
</feature>
<feature type="strand" evidence="8">
    <location>
        <begin position="517"/>
        <end position="523"/>
    </location>
</feature>
<feature type="strand" evidence="8">
    <location>
        <begin position="525"/>
        <end position="528"/>
    </location>
</feature>
<feature type="strand" evidence="8">
    <location>
        <begin position="536"/>
        <end position="539"/>
    </location>
</feature>
<feature type="helix" evidence="8">
    <location>
        <begin position="545"/>
        <end position="551"/>
    </location>
</feature>
<feature type="strand" evidence="8">
    <location>
        <begin position="553"/>
        <end position="555"/>
    </location>
</feature>
<feature type="strand" evidence="8">
    <location>
        <begin position="561"/>
        <end position="564"/>
    </location>
</feature>
<feature type="turn" evidence="9">
    <location>
        <begin position="567"/>
        <end position="569"/>
    </location>
</feature>
<feature type="strand" evidence="8">
    <location>
        <begin position="581"/>
        <end position="586"/>
    </location>
</feature>
<feature type="strand" evidence="8">
    <location>
        <begin position="589"/>
        <end position="596"/>
    </location>
</feature>
<feature type="strand" evidence="9">
    <location>
        <begin position="600"/>
        <end position="603"/>
    </location>
</feature>
<feature type="strand" evidence="8">
    <location>
        <begin position="609"/>
        <end position="613"/>
    </location>
</feature>
<feature type="helix" evidence="8">
    <location>
        <begin position="614"/>
        <end position="617"/>
    </location>
</feature>
<feature type="helix" evidence="8">
    <location>
        <begin position="618"/>
        <end position="624"/>
    </location>
</feature>
<evidence type="ECO:0000250" key="1"/>
<evidence type="ECO:0000255" key="2"/>
<evidence type="ECO:0000255" key="3">
    <source>
        <dbReference type="PROSITE-ProRule" id="PRU00274"/>
    </source>
</evidence>
<evidence type="ECO:0000255" key="4">
    <source>
        <dbReference type="PROSITE-ProRule" id="PRU00315"/>
    </source>
</evidence>
<evidence type="ECO:0000269" key="5">
    <source>
    </source>
</evidence>
<evidence type="ECO:0000269" key="6">
    <source>
    </source>
</evidence>
<evidence type="ECO:0000305" key="7"/>
<evidence type="ECO:0007829" key="8">
    <source>
        <dbReference type="PDB" id="5GVT"/>
    </source>
</evidence>
<evidence type="ECO:0007829" key="9">
    <source>
        <dbReference type="PDB" id="6A8O"/>
    </source>
</evidence>
<dbReference type="EC" id="3.4.21.34"/>
<dbReference type="EMBL" id="M58588">
    <property type="protein sequence ID" value="AAA63393.1"/>
    <property type="molecule type" value="mRNA"/>
</dbReference>
<dbReference type="EMBL" id="BC026555">
    <property type="protein sequence ID" value="AAH26555.1"/>
    <property type="molecule type" value="mRNA"/>
</dbReference>
<dbReference type="CCDS" id="CCDS22275.1"/>
<dbReference type="PIR" id="A36557">
    <property type="entry name" value="KQMSPL"/>
</dbReference>
<dbReference type="RefSeq" id="NP_032481.2">
    <property type="nucleotide sequence ID" value="NM_008455.3"/>
</dbReference>
<dbReference type="PDB" id="5GVT">
    <property type="method" value="X-ray"/>
    <property type="resolution" value="2.61 A"/>
    <property type="chains" value="A/B=391-638"/>
</dbReference>
<dbReference type="PDB" id="6A8O">
    <property type="method" value="X-ray"/>
    <property type="resolution" value="2.77 A"/>
    <property type="chains" value="A/B=391-638"/>
</dbReference>
<dbReference type="PDBsum" id="5GVT"/>
<dbReference type="PDBsum" id="6A8O"/>
<dbReference type="SMR" id="P26262"/>
<dbReference type="BioGRID" id="200983">
    <property type="interactions" value="1"/>
</dbReference>
<dbReference type="FunCoup" id="P26262">
    <property type="interactions" value="394"/>
</dbReference>
<dbReference type="STRING" id="10090.ENSMUSP00000026907"/>
<dbReference type="BindingDB" id="P26262"/>
<dbReference type="ChEMBL" id="CHEMBL1250359"/>
<dbReference type="MEROPS" id="S01.212"/>
<dbReference type="GlyCosmos" id="P26262">
    <property type="glycosylation" value="5 sites, No reported glycans"/>
</dbReference>
<dbReference type="GlyGen" id="P26262">
    <property type="glycosylation" value="6 sites, 1 N-linked glycan (2 sites)"/>
</dbReference>
<dbReference type="iPTMnet" id="P26262"/>
<dbReference type="PhosphoSitePlus" id="P26262"/>
<dbReference type="SwissPalm" id="P26262"/>
<dbReference type="CPTAC" id="non-CPTAC-5603"/>
<dbReference type="PaxDb" id="10090-ENSMUSP00000112174"/>
<dbReference type="PeptideAtlas" id="P26262"/>
<dbReference type="ProteomicsDB" id="263662"/>
<dbReference type="Antibodypedia" id="850">
    <property type="antibodies" value="397 antibodies from 37 providers"/>
</dbReference>
<dbReference type="DNASU" id="16621"/>
<dbReference type="Ensembl" id="ENSMUST00000026907.6">
    <property type="protein sequence ID" value="ENSMUSP00000026907.6"/>
    <property type="gene ID" value="ENSMUSG00000109764.2"/>
</dbReference>
<dbReference type="GeneID" id="16621"/>
<dbReference type="KEGG" id="mmu:16621"/>
<dbReference type="UCSC" id="uc009lot.4">
    <property type="organism name" value="mouse"/>
</dbReference>
<dbReference type="AGR" id="MGI:102849"/>
<dbReference type="CTD" id="3818"/>
<dbReference type="MGI" id="MGI:102849">
    <property type="gene designation" value="Klkb1"/>
</dbReference>
<dbReference type="VEuPathDB" id="HostDB:ENSMUSG00000109764"/>
<dbReference type="eggNOG" id="KOG3627">
    <property type="taxonomic scope" value="Eukaryota"/>
</dbReference>
<dbReference type="GeneTree" id="ENSGT00940000161669"/>
<dbReference type="HOGENOM" id="CLU_031604_0_0_1"/>
<dbReference type="InParanoid" id="P26262"/>
<dbReference type="OMA" id="TAMYTPN"/>
<dbReference type="OrthoDB" id="9448935at2759"/>
<dbReference type="PhylomeDB" id="P26262"/>
<dbReference type="TreeFam" id="TF343687"/>
<dbReference type="BRENDA" id="3.4.21.34">
    <property type="organism ID" value="3474"/>
</dbReference>
<dbReference type="Reactome" id="R-MMU-140837">
    <property type="pathway name" value="Intrinsic Pathway of Fibrin Clot Formation"/>
</dbReference>
<dbReference type="Reactome" id="R-MMU-1592389">
    <property type="pathway name" value="Activation of Matrix Metalloproteinases"/>
</dbReference>
<dbReference type="BioGRID-ORCS" id="16621">
    <property type="hits" value="3 hits in 45 CRISPR screens"/>
</dbReference>
<dbReference type="PRO" id="PR:P26262"/>
<dbReference type="Proteomes" id="UP000000589">
    <property type="component" value="Chromosome 8"/>
</dbReference>
<dbReference type="RNAct" id="P26262">
    <property type="molecule type" value="protein"/>
</dbReference>
<dbReference type="Bgee" id="ENSMUSG00000109764">
    <property type="expression patterns" value="Expressed in left lobe of liver and 31 other cell types or tissues"/>
</dbReference>
<dbReference type="GO" id="GO:0005615">
    <property type="term" value="C:extracellular space"/>
    <property type="evidence" value="ECO:0007669"/>
    <property type="project" value="Ensembl"/>
</dbReference>
<dbReference type="GO" id="GO:0004252">
    <property type="term" value="F:serine-type endopeptidase activity"/>
    <property type="evidence" value="ECO:0007669"/>
    <property type="project" value="UniProtKB-EC"/>
</dbReference>
<dbReference type="GO" id="GO:0007596">
    <property type="term" value="P:blood coagulation"/>
    <property type="evidence" value="ECO:0007669"/>
    <property type="project" value="UniProtKB-KW"/>
</dbReference>
<dbReference type="GO" id="GO:0042730">
    <property type="term" value="P:fibrinolysis"/>
    <property type="evidence" value="ECO:0007669"/>
    <property type="project" value="UniProtKB-KW"/>
</dbReference>
<dbReference type="GO" id="GO:0006954">
    <property type="term" value="P:inflammatory response"/>
    <property type="evidence" value="ECO:0007669"/>
    <property type="project" value="UniProtKB-KW"/>
</dbReference>
<dbReference type="GO" id="GO:0031639">
    <property type="term" value="P:plasminogen activation"/>
    <property type="evidence" value="ECO:0007669"/>
    <property type="project" value="Ensembl"/>
</dbReference>
<dbReference type="GO" id="GO:0051919">
    <property type="term" value="P:positive regulation of fibrinolysis"/>
    <property type="evidence" value="ECO:0007669"/>
    <property type="project" value="Ensembl"/>
</dbReference>
<dbReference type="CDD" id="cd01100">
    <property type="entry name" value="APPLE_Factor_XI_like"/>
    <property type="match status" value="4"/>
</dbReference>
<dbReference type="CDD" id="cd00190">
    <property type="entry name" value="Tryp_SPc"/>
    <property type="match status" value="1"/>
</dbReference>
<dbReference type="FunFam" id="3.50.4.10:FF:000001">
    <property type="entry name" value="Coagulation factor XI"/>
    <property type="match status" value="4"/>
</dbReference>
<dbReference type="FunFam" id="2.40.10.10:FF:000003">
    <property type="entry name" value="Transmembrane serine protease 3"/>
    <property type="match status" value="1"/>
</dbReference>
<dbReference type="Gene3D" id="3.50.4.10">
    <property type="entry name" value="Hepatocyte Growth Factor"/>
    <property type="match status" value="4"/>
</dbReference>
<dbReference type="Gene3D" id="2.40.10.10">
    <property type="entry name" value="Trypsin-like serine proteases"/>
    <property type="match status" value="1"/>
</dbReference>
<dbReference type="InterPro" id="IPR000177">
    <property type="entry name" value="Apple"/>
</dbReference>
<dbReference type="InterPro" id="IPR003609">
    <property type="entry name" value="Pan_app"/>
</dbReference>
<dbReference type="InterPro" id="IPR009003">
    <property type="entry name" value="Peptidase_S1_PA"/>
</dbReference>
<dbReference type="InterPro" id="IPR043504">
    <property type="entry name" value="Peptidase_S1_PA_chymotrypsin"/>
</dbReference>
<dbReference type="InterPro" id="IPR001314">
    <property type="entry name" value="Peptidase_S1A"/>
</dbReference>
<dbReference type="InterPro" id="IPR001254">
    <property type="entry name" value="Trypsin_dom"/>
</dbReference>
<dbReference type="InterPro" id="IPR018114">
    <property type="entry name" value="TRYPSIN_HIS"/>
</dbReference>
<dbReference type="InterPro" id="IPR033116">
    <property type="entry name" value="TRYPSIN_SER"/>
</dbReference>
<dbReference type="PANTHER" id="PTHR24252">
    <property type="entry name" value="ACROSIN-RELATED"/>
    <property type="match status" value="1"/>
</dbReference>
<dbReference type="PANTHER" id="PTHR24252:SF7">
    <property type="entry name" value="HYALIN"/>
    <property type="match status" value="1"/>
</dbReference>
<dbReference type="Pfam" id="PF00024">
    <property type="entry name" value="PAN_1"/>
    <property type="match status" value="4"/>
</dbReference>
<dbReference type="Pfam" id="PF00089">
    <property type="entry name" value="Trypsin"/>
    <property type="match status" value="1"/>
</dbReference>
<dbReference type="PRINTS" id="PR00005">
    <property type="entry name" value="APPLEDOMAIN"/>
</dbReference>
<dbReference type="PRINTS" id="PR00722">
    <property type="entry name" value="CHYMOTRYPSIN"/>
</dbReference>
<dbReference type="SMART" id="SM00223">
    <property type="entry name" value="APPLE"/>
    <property type="match status" value="4"/>
</dbReference>
<dbReference type="SMART" id="SM00020">
    <property type="entry name" value="Tryp_SPc"/>
    <property type="match status" value="1"/>
</dbReference>
<dbReference type="SUPFAM" id="SSF57414">
    <property type="entry name" value="Hairpin loop containing domain-like"/>
    <property type="match status" value="1"/>
</dbReference>
<dbReference type="SUPFAM" id="SSF50494">
    <property type="entry name" value="Trypsin-like serine proteases"/>
    <property type="match status" value="1"/>
</dbReference>
<dbReference type="PROSITE" id="PS00495">
    <property type="entry name" value="APPLE"/>
    <property type="match status" value="4"/>
</dbReference>
<dbReference type="PROSITE" id="PS50948">
    <property type="entry name" value="PAN"/>
    <property type="match status" value="4"/>
</dbReference>
<dbReference type="PROSITE" id="PS50240">
    <property type="entry name" value="TRYPSIN_DOM"/>
    <property type="match status" value="1"/>
</dbReference>
<dbReference type="PROSITE" id="PS00134">
    <property type="entry name" value="TRYPSIN_HIS"/>
    <property type="match status" value="1"/>
</dbReference>
<dbReference type="PROSITE" id="PS00135">
    <property type="entry name" value="TRYPSIN_SER"/>
    <property type="match status" value="1"/>
</dbReference>
<protein>
    <recommendedName>
        <fullName>Plasma kallikrein</fullName>
        <ecNumber>3.4.21.34</ecNumber>
    </recommendedName>
    <alternativeName>
        <fullName>Fletcher factor</fullName>
    </alternativeName>
    <alternativeName>
        <fullName>Kininogenin</fullName>
    </alternativeName>
    <alternativeName>
        <fullName>Plasma prekallikrein</fullName>
    </alternativeName>
    <component>
        <recommendedName>
            <fullName>Plasma kallikrein heavy chain</fullName>
        </recommendedName>
    </component>
    <component>
        <recommendedName>
            <fullName>Plasma kallikrein light chain</fullName>
        </recommendedName>
    </component>
</protein>
<sequence length="638" mass="71383">MILFNRVGYFVSLFATVSCGCMTQLYKNTFFRGGDLAAIYTPDAQYCQKMCTFHPRCLLFSFLAVTPPKETNKRFGCFMKESITGTLPRIHRTGAISGHSLKQCGHQISACHRDIYKGLDMRGSNFNISKTDNIEECQKLCTNNFHCQFFTYATSAFYRPEYRKKCLLKHSASGTPTSIKSADNLVSGFSLKSCALSEIGCPMDIFQHSAFADLNVSQVITPDAFVCRTICTFHPNCLFFTFYTNEWETESQRNVCFLKTSKSGRPSPPIPQENAISGYSLLTCRKTRPEPCHSKIYSGVDFEGEELNVTFVQGADVCQETCTKTIRCQFFIYSLLPQDCKEEGCKCSLRLSTDGSPTRITYGMQGSSGYSLRLCKLVDSPDCTTKINARIVGGTNASLGEWPWQVSLQVKLVSQTHLCGGSIIGRQWVLTAAHCFDGIPYPDVWRIYGGILSLSEITKETPSSRIKELIIHQEYKVSEGNYDIALIKLQTPLNYTEFQKPICLPSKADTNTIYTNCWVTGWGYTKEQGETQNILQKATIPLVPNEECQKKYRDYVINKQMICAGYKEGGTDACKGDSGGPLVCKHSGRWQLVGITSWGEGCARKDQPGVYTKVSEYMDWILEKTQSSDVRALETSSA</sequence>
<proteinExistence type="evidence at protein level"/>
<organism>
    <name type="scientific">Mus musculus</name>
    <name type="common">Mouse</name>
    <dbReference type="NCBI Taxonomy" id="10090"/>
    <lineage>
        <taxon>Eukaryota</taxon>
        <taxon>Metazoa</taxon>
        <taxon>Chordata</taxon>
        <taxon>Craniata</taxon>
        <taxon>Vertebrata</taxon>
        <taxon>Euteleostomi</taxon>
        <taxon>Mammalia</taxon>
        <taxon>Eutheria</taxon>
        <taxon>Euarchontoglires</taxon>
        <taxon>Glires</taxon>
        <taxon>Rodentia</taxon>
        <taxon>Myomorpha</taxon>
        <taxon>Muroidea</taxon>
        <taxon>Muridae</taxon>
        <taxon>Murinae</taxon>
        <taxon>Mus</taxon>
        <taxon>Mus</taxon>
    </lineage>
</organism>
<gene>
    <name type="primary">Klkb1</name>
    <name type="synonym">Klk3</name>
    <name type="synonym">Pk</name>
</gene>
<accession>P26262</accession>
<accession>Q8R0P5</accession>
<name>KLKB1_MOUSE</name>